<name>MNME_SHEWM</name>
<organism>
    <name type="scientific">Shewanella woodyi (strain ATCC 51908 / MS32)</name>
    <dbReference type="NCBI Taxonomy" id="392500"/>
    <lineage>
        <taxon>Bacteria</taxon>
        <taxon>Pseudomonadati</taxon>
        <taxon>Pseudomonadota</taxon>
        <taxon>Gammaproteobacteria</taxon>
        <taxon>Alteromonadales</taxon>
        <taxon>Shewanellaceae</taxon>
        <taxon>Shewanella</taxon>
    </lineage>
</organism>
<gene>
    <name evidence="1" type="primary">mnmE</name>
    <name evidence="1" type="synonym">trmE</name>
    <name type="ordered locus">Swoo_4928</name>
</gene>
<accession>B1KQ64</accession>
<proteinExistence type="inferred from homology"/>
<feature type="chain" id="PRO_0000345904" description="tRNA modification GTPase MnmE">
    <location>
        <begin position="1"/>
        <end position="453"/>
    </location>
</feature>
<feature type="domain" description="TrmE-type G">
    <location>
        <begin position="215"/>
        <end position="376"/>
    </location>
</feature>
<feature type="binding site" evidence="1">
    <location>
        <position position="22"/>
    </location>
    <ligand>
        <name>(6S)-5-formyl-5,6,7,8-tetrahydrofolate</name>
        <dbReference type="ChEBI" id="CHEBI:57457"/>
    </ligand>
</feature>
<feature type="binding site" evidence="1">
    <location>
        <position position="79"/>
    </location>
    <ligand>
        <name>(6S)-5-formyl-5,6,7,8-tetrahydrofolate</name>
        <dbReference type="ChEBI" id="CHEBI:57457"/>
    </ligand>
</feature>
<feature type="binding site" evidence="1">
    <location>
        <position position="119"/>
    </location>
    <ligand>
        <name>(6S)-5-formyl-5,6,7,8-tetrahydrofolate</name>
        <dbReference type="ChEBI" id="CHEBI:57457"/>
    </ligand>
</feature>
<feature type="binding site" evidence="1">
    <location>
        <begin position="225"/>
        <end position="230"/>
    </location>
    <ligand>
        <name>GTP</name>
        <dbReference type="ChEBI" id="CHEBI:37565"/>
    </ligand>
</feature>
<feature type="binding site" evidence="1">
    <location>
        <position position="225"/>
    </location>
    <ligand>
        <name>K(+)</name>
        <dbReference type="ChEBI" id="CHEBI:29103"/>
    </ligand>
</feature>
<feature type="binding site" evidence="1">
    <location>
        <position position="229"/>
    </location>
    <ligand>
        <name>Mg(2+)</name>
        <dbReference type="ChEBI" id="CHEBI:18420"/>
    </ligand>
</feature>
<feature type="binding site" evidence="1">
    <location>
        <begin position="244"/>
        <end position="250"/>
    </location>
    <ligand>
        <name>GTP</name>
        <dbReference type="ChEBI" id="CHEBI:37565"/>
    </ligand>
</feature>
<feature type="binding site" evidence="1">
    <location>
        <position position="244"/>
    </location>
    <ligand>
        <name>K(+)</name>
        <dbReference type="ChEBI" id="CHEBI:29103"/>
    </ligand>
</feature>
<feature type="binding site" evidence="1">
    <location>
        <position position="246"/>
    </location>
    <ligand>
        <name>K(+)</name>
        <dbReference type="ChEBI" id="CHEBI:29103"/>
    </ligand>
</feature>
<feature type="binding site" evidence="1">
    <location>
        <position position="249"/>
    </location>
    <ligand>
        <name>K(+)</name>
        <dbReference type="ChEBI" id="CHEBI:29103"/>
    </ligand>
</feature>
<feature type="binding site" evidence="1">
    <location>
        <position position="250"/>
    </location>
    <ligand>
        <name>Mg(2+)</name>
        <dbReference type="ChEBI" id="CHEBI:18420"/>
    </ligand>
</feature>
<feature type="binding site" evidence="1">
    <location>
        <begin position="269"/>
        <end position="272"/>
    </location>
    <ligand>
        <name>GTP</name>
        <dbReference type="ChEBI" id="CHEBI:37565"/>
    </ligand>
</feature>
<feature type="binding site" evidence="1">
    <location>
        <begin position="334"/>
        <end position="337"/>
    </location>
    <ligand>
        <name>GTP</name>
        <dbReference type="ChEBI" id="CHEBI:37565"/>
    </ligand>
</feature>
<feature type="binding site" evidence="1">
    <location>
        <position position="453"/>
    </location>
    <ligand>
        <name>(6S)-5-formyl-5,6,7,8-tetrahydrofolate</name>
        <dbReference type="ChEBI" id="CHEBI:57457"/>
    </ligand>
</feature>
<comment type="function">
    <text evidence="1">Exhibits a very high intrinsic GTPase hydrolysis rate. Involved in the addition of a carboxymethylaminomethyl (cmnm) group at the wobble position (U34) of certain tRNAs, forming tRNA-cmnm(5)s(2)U34.</text>
</comment>
<comment type="cofactor">
    <cofactor evidence="1">
        <name>K(+)</name>
        <dbReference type="ChEBI" id="CHEBI:29103"/>
    </cofactor>
    <text evidence="1">Binds 1 potassium ion per subunit.</text>
</comment>
<comment type="subunit">
    <text evidence="1">Homodimer. Heterotetramer of two MnmE and two MnmG subunits.</text>
</comment>
<comment type="subcellular location">
    <subcellularLocation>
        <location evidence="1">Cytoplasm</location>
    </subcellularLocation>
</comment>
<comment type="similarity">
    <text evidence="1">Belongs to the TRAFAC class TrmE-Era-EngA-EngB-Septin-like GTPase superfamily. TrmE GTPase family.</text>
</comment>
<evidence type="ECO:0000255" key="1">
    <source>
        <dbReference type="HAMAP-Rule" id="MF_00379"/>
    </source>
</evidence>
<sequence length="453" mass="49120">MTTDTIVAQATAPGRGGVGIIRISGDKASDVAMAVLGHLPKTRYADYCDFKDAENAVIDQGIALYFQGPNSFTGEDVLELQGHGGQIVLDMLIKRVMEVDGVRIAKPGEFSEQAFMNDKMDLTQAEAIADLIDATSEQAAKSALNSLQGEFSVQIHELVEQVTNLRLYVEAAIDFPDEEVDFLSDGKIAGSLNRIITKLDSVQASAKQGAIIREGMKVVIAGRPNAGKSSLLNALAGKESAIVTEIAGTTRDVLREHIHLDGMPLHIIDTAGLRDTDDTVEMIGIERAWAEIETADQVLFMVDGTTTDAVDPREIWPDFIDRLPKNLGITVVRNKADITGEPLTVTQDHGHSVFKISAKTGLGVESLQQHLKSLMGYQSNLEGGFIARRRHLEALDLASSHLMIGKEQLEVYLAGELLAEELRMTQMALSEITGKFTSDDLLGKIFSSFCIGK</sequence>
<protein>
    <recommendedName>
        <fullName evidence="1">tRNA modification GTPase MnmE</fullName>
        <ecNumber evidence="1">3.6.-.-</ecNumber>
    </recommendedName>
</protein>
<keyword id="KW-0963">Cytoplasm</keyword>
<keyword id="KW-0342">GTP-binding</keyword>
<keyword id="KW-0378">Hydrolase</keyword>
<keyword id="KW-0460">Magnesium</keyword>
<keyword id="KW-0479">Metal-binding</keyword>
<keyword id="KW-0547">Nucleotide-binding</keyword>
<keyword id="KW-0630">Potassium</keyword>
<keyword id="KW-1185">Reference proteome</keyword>
<keyword id="KW-0819">tRNA processing</keyword>
<dbReference type="EC" id="3.6.-.-" evidence="1"/>
<dbReference type="EMBL" id="CP000961">
    <property type="protein sequence ID" value="ACA89177.1"/>
    <property type="molecule type" value="Genomic_DNA"/>
</dbReference>
<dbReference type="RefSeq" id="WP_012327493.1">
    <property type="nucleotide sequence ID" value="NC_010506.1"/>
</dbReference>
<dbReference type="SMR" id="B1KQ64"/>
<dbReference type="STRING" id="392500.Swoo_4928"/>
<dbReference type="KEGG" id="swd:Swoo_4928"/>
<dbReference type="eggNOG" id="COG0486">
    <property type="taxonomic scope" value="Bacteria"/>
</dbReference>
<dbReference type="HOGENOM" id="CLU_019624_4_1_6"/>
<dbReference type="Proteomes" id="UP000002168">
    <property type="component" value="Chromosome"/>
</dbReference>
<dbReference type="GO" id="GO:0005829">
    <property type="term" value="C:cytosol"/>
    <property type="evidence" value="ECO:0007669"/>
    <property type="project" value="TreeGrafter"/>
</dbReference>
<dbReference type="GO" id="GO:0005525">
    <property type="term" value="F:GTP binding"/>
    <property type="evidence" value="ECO:0007669"/>
    <property type="project" value="UniProtKB-UniRule"/>
</dbReference>
<dbReference type="GO" id="GO:0003924">
    <property type="term" value="F:GTPase activity"/>
    <property type="evidence" value="ECO:0007669"/>
    <property type="project" value="UniProtKB-UniRule"/>
</dbReference>
<dbReference type="GO" id="GO:0046872">
    <property type="term" value="F:metal ion binding"/>
    <property type="evidence" value="ECO:0007669"/>
    <property type="project" value="UniProtKB-KW"/>
</dbReference>
<dbReference type="GO" id="GO:0030488">
    <property type="term" value="P:tRNA methylation"/>
    <property type="evidence" value="ECO:0007669"/>
    <property type="project" value="TreeGrafter"/>
</dbReference>
<dbReference type="GO" id="GO:0002098">
    <property type="term" value="P:tRNA wobble uridine modification"/>
    <property type="evidence" value="ECO:0007669"/>
    <property type="project" value="TreeGrafter"/>
</dbReference>
<dbReference type="CDD" id="cd04164">
    <property type="entry name" value="trmE"/>
    <property type="match status" value="1"/>
</dbReference>
<dbReference type="CDD" id="cd14858">
    <property type="entry name" value="TrmE_N"/>
    <property type="match status" value="1"/>
</dbReference>
<dbReference type="FunFam" id="3.30.1360.120:FF:000001">
    <property type="entry name" value="tRNA modification GTPase MnmE"/>
    <property type="match status" value="1"/>
</dbReference>
<dbReference type="FunFam" id="3.40.50.300:FF:000249">
    <property type="entry name" value="tRNA modification GTPase MnmE"/>
    <property type="match status" value="1"/>
</dbReference>
<dbReference type="Gene3D" id="3.40.50.300">
    <property type="entry name" value="P-loop containing nucleotide triphosphate hydrolases"/>
    <property type="match status" value="1"/>
</dbReference>
<dbReference type="Gene3D" id="3.30.1360.120">
    <property type="entry name" value="Probable tRNA modification gtpase trme, domain 1"/>
    <property type="match status" value="1"/>
</dbReference>
<dbReference type="Gene3D" id="1.20.120.430">
    <property type="entry name" value="tRNA modification GTPase MnmE domain 2"/>
    <property type="match status" value="1"/>
</dbReference>
<dbReference type="HAMAP" id="MF_00379">
    <property type="entry name" value="GTPase_MnmE"/>
    <property type="match status" value="1"/>
</dbReference>
<dbReference type="InterPro" id="IPR031168">
    <property type="entry name" value="G_TrmE"/>
</dbReference>
<dbReference type="InterPro" id="IPR006073">
    <property type="entry name" value="GTP-bd"/>
</dbReference>
<dbReference type="InterPro" id="IPR018948">
    <property type="entry name" value="GTP-bd_TrmE_N"/>
</dbReference>
<dbReference type="InterPro" id="IPR004520">
    <property type="entry name" value="GTPase_MnmE"/>
</dbReference>
<dbReference type="InterPro" id="IPR027368">
    <property type="entry name" value="MnmE_dom2"/>
</dbReference>
<dbReference type="InterPro" id="IPR025867">
    <property type="entry name" value="MnmE_helical"/>
</dbReference>
<dbReference type="InterPro" id="IPR027417">
    <property type="entry name" value="P-loop_NTPase"/>
</dbReference>
<dbReference type="InterPro" id="IPR005225">
    <property type="entry name" value="Small_GTP-bd"/>
</dbReference>
<dbReference type="InterPro" id="IPR027266">
    <property type="entry name" value="TrmE/GcvT_dom1"/>
</dbReference>
<dbReference type="NCBIfam" id="TIGR00450">
    <property type="entry name" value="mnmE_trmE_thdF"/>
    <property type="match status" value="1"/>
</dbReference>
<dbReference type="NCBIfam" id="NF003661">
    <property type="entry name" value="PRK05291.1-3"/>
    <property type="match status" value="1"/>
</dbReference>
<dbReference type="NCBIfam" id="TIGR00231">
    <property type="entry name" value="small_GTP"/>
    <property type="match status" value="1"/>
</dbReference>
<dbReference type="PANTHER" id="PTHR42714">
    <property type="entry name" value="TRNA MODIFICATION GTPASE GTPBP3"/>
    <property type="match status" value="1"/>
</dbReference>
<dbReference type="PANTHER" id="PTHR42714:SF2">
    <property type="entry name" value="TRNA MODIFICATION GTPASE GTPBP3, MITOCHONDRIAL"/>
    <property type="match status" value="1"/>
</dbReference>
<dbReference type="Pfam" id="PF01926">
    <property type="entry name" value="MMR_HSR1"/>
    <property type="match status" value="1"/>
</dbReference>
<dbReference type="Pfam" id="PF12631">
    <property type="entry name" value="MnmE_helical"/>
    <property type="match status" value="1"/>
</dbReference>
<dbReference type="Pfam" id="PF10396">
    <property type="entry name" value="TrmE_N"/>
    <property type="match status" value="1"/>
</dbReference>
<dbReference type="SUPFAM" id="SSF52540">
    <property type="entry name" value="P-loop containing nucleoside triphosphate hydrolases"/>
    <property type="match status" value="1"/>
</dbReference>
<dbReference type="SUPFAM" id="SSF116878">
    <property type="entry name" value="TrmE connector domain"/>
    <property type="match status" value="1"/>
</dbReference>
<dbReference type="PROSITE" id="PS51709">
    <property type="entry name" value="G_TRME"/>
    <property type="match status" value="1"/>
</dbReference>
<reference key="1">
    <citation type="submission" date="2008-02" db="EMBL/GenBank/DDBJ databases">
        <title>Complete sequence of Shewanella woodyi ATCC 51908.</title>
        <authorList>
            <consortium name="US DOE Joint Genome Institute"/>
            <person name="Copeland A."/>
            <person name="Lucas S."/>
            <person name="Lapidus A."/>
            <person name="Glavina del Rio T."/>
            <person name="Dalin E."/>
            <person name="Tice H."/>
            <person name="Bruce D."/>
            <person name="Goodwin L."/>
            <person name="Pitluck S."/>
            <person name="Sims D."/>
            <person name="Brettin T."/>
            <person name="Detter J.C."/>
            <person name="Han C."/>
            <person name="Kuske C.R."/>
            <person name="Schmutz J."/>
            <person name="Larimer F."/>
            <person name="Land M."/>
            <person name="Hauser L."/>
            <person name="Kyrpides N."/>
            <person name="Lykidis A."/>
            <person name="Zhao J.-S."/>
            <person name="Richardson P."/>
        </authorList>
    </citation>
    <scope>NUCLEOTIDE SEQUENCE [LARGE SCALE GENOMIC DNA]</scope>
    <source>
        <strain>ATCC 51908 / MS32</strain>
    </source>
</reference>